<accession>Q478U7</accession>
<sequence length="231" mass="26435">MKILGRWLKLLLLGLIGLFLVWQLWLLGWVLLWGWVNPGETRFMAIRLAELRQKVPEAQLKQQWVPYERISIHLKRAIIAAEDAKFVDHEGFDWEGIQKAMEKNQKKGRFVAGGSTISQQLAKNLFLTPTKSYFRKVEEAIITLMLENLWSKKRIFEVYLNVIEWGNGVFGAEAAARHYYNTSAAQLGPEQAARLAGMVPNPRYYDRNRSAQGLGRKTAIILARMPAADVP</sequence>
<proteinExistence type="inferred from homology"/>
<name>MTGA_DECAR</name>
<comment type="function">
    <text evidence="1">Peptidoglycan polymerase that catalyzes glycan chain elongation from lipid-linked precursors.</text>
</comment>
<comment type="catalytic activity">
    <reaction evidence="1">
        <text>[GlcNAc-(1-&gt;4)-Mur2Ac(oyl-L-Ala-gamma-D-Glu-L-Lys-D-Ala-D-Ala)](n)-di-trans,octa-cis-undecaprenyl diphosphate + beta-D-GlcNAc-(1-&gt;4)-Mur2Ac(oyl-L-Ala-gamma-D-Glu-L-Lys-D-Ala-D-Ala)-di-trans,octa-cis-undecaprenyl diphosphate = [GlcNAc-(1-&gt;4)-Mur2Ac(oyl-L-Ala-gamma-D-Glu-L-Lys-D-Ala-D-Ala)](n+1)-di-trans,octa-cis-undecaprenyl diphosphate + di-trans,octa-cis-undecaprenyl diphosphate + H(+)</text>
        <dbReference type="Rhea" id="RHEA:23708"/>
        <dbReference type="Rhea" id="RHEA-COMP:9602"/>
        <dbReference type="Rhea" id="RHEA-COMP:9603"/>
        <dbReference type="ChEBI" id="CHEBI:15378"/>
        <dbReference type="ChEBI" id="CHEBI:58405"/>
        <dbReference type="ChEBI" id="CHEBI:60033"/>
        <dbReference type="ChEBI" id="CHEBI:78435"/>
        <dbReference type="EC" id="2.4.99.28"/>
    </reaction>
</comment>
<comment type="pathway">
    <text evidence="1">Cell wall biogenesis; peptidoglycan biosynthesis.</text>
</comment>
<comment type="subcellular location">
    <subcellularLocation>
        <location evidence="1">Cell inner membrane</location>
        <topology evidence="1">Single-pass membrane protein</topology>
    </subcellularLocation>
</comment>
<comment type="similarity">
    <text evidence="1">Belongs to the glycosyltransferase 51 family.</text>
</comment>
<reference key="1">
    <citation type="journal article" date="2009" name="BMC Genomics">
        <title>Metabolic analysis of the soil microbe Dechloromonas aromatica str. RCB: indications of a surprisingly complex life-style and cryptic anaerobic pathways for aromatic degradation.</title>
        <authorList>
            <person name="Salinero K.K."/>
            <person name="Keller K."/>
            <person name="Feil W.S."/>
            <person name="Feil H."/>
            <person name="Trong S."/>
            <person name="Di Bartolo G."/>
            <person name="Lapidus A."/>
        </authorList>
    </citation>
    <scope>NUCLEOTIDE SEQUENCE [LARGE SCALE GENOMIC DNA]</scope>
    <source>
        <strain>RCB</strain>
    </source>
</reference>
<organism>
    <name type="scientific">Dechloromonas aromatica (strain RCB)</name>
    <dbReference type="NCBI Taxonomy" id="159087"/>
    <lineage>
        <taxon>Bacteria</taxon>
        <taxon>Pseudomonadati</taxon>
        <taxon>Pseudomonadota</taxon>
        <taxon>Betaproteobacteria</taxon>
        <taxon>Rhodocyclales</taxon>
        <taxon>Azonexaceae</taxon>
        <taxon>Dechloromonas</taxon>
    </lineage>
</organism>
<dbReference type="EC" id="2.4.99.28" evidence="1"/>
<dbReference type="EMBL" id="CP000089">
    <property type="protein sequence ID" value="AAZ48634.1"/>
    <property type="molecule type" value="Genomic_DNA"/>
</dbReference>
<dbReference type="SMR" id="Q478U7"/>
<dbReference type="STRING" id="159087.Daro_3906"/>
<dbReference type="CAZy" id="GT51">
    <property type="family name" value="Glycosyltransferase Family 51"/>
</dbReference>
<dbReference type="KEGG" id="dar:Daro_3906"/>
<dbReference type="eggNOG" id="COG0744">
    <property type="taxonomic scope" value="Bacteria"/>
</dbReference>
<dbReference type="HOGENOM" id="CLU_006354_1_0_4"/>
<dbReference type="OrthoDB" id="9766909at2"/>
<dbReference type="UniPathway" id="UPA00219"/>
<dbReference type="GO" id="GO:0009274">
    <property type="term" value="C:peptidoglycan-based cell wall"/>
    <property type="evidence" value="ECO:0007669"/>
    <property type="project" value="InterPro"/>
</dbReference>
<dbReference type="GO" id="GO:0005886">
    <property type="term" value="C:plasma membrane"/>
    <property type="evidence" value="ECO:0007669"/>
    <property type="project" value="UniProtKB-SubCell"/>
</dbReference>
<dbReference type="GO" id="GO:0016763">
    <property type="term" value="F:pentosyltransferase activity"/>
    <property type="evidence" value="ECO:0007669"/>
    <property type="project" value="InterPro"/>
</dbReference>
<dbReference type="GO" id="GO:0008955">
    <property type="term" value="F:peptidoglycan glycosyltransferase activity"/>
    <property type="evidence" value="ECO:0007669"/>
    <property type="project" value="UniProtKB-UniRule"/>
</dbReference>
<dbReference type="GO" id="GO:0071555">
    <property type="term" value="P:cell wall organization"/>
    <property type="evidence" value="ECO:0007669"/>
    <property type="project" value="UniProtKB-KW"/>
</dbReference>
<dbReference type="GO" id="GO:0009252">
    <property type="term" value="P:peptidoglycan biosynthetic process"/>
    <property type="evidence" value="ECO:0007669"/>
    <property type="project" value="UniProtKB-UniRule"/>
</dbReference>
<dbReference type="GO" id="GO:0008360">
    <property type="term" value="P:regulation of cell shape"/>
    <property type="evidence" value="ECO:0007669"/>
    <property type="project" value="UniProtKB-KW"/>
</dbReference>
<dbReference type="Gene3D" id="1.10.3810.10">
    <property type="entry name" value="Biosynthetic peptidoglycan transglycosylase-like"/>
    <property type="match status" value="1"/>
</dbReference>
<dbReference type="HAMAP" id="MF_00766">
    <property type="entry name" value="PGT_MtgA"/>
    <property type="match status" value="1"/>
</dbReference>
<dbReference type="InterPro" id="IPR001264">
    <property type="entry name" value="Glyco_trans_51"/>
</dbReference>
<dbReference type="InterPro" id="IPR023346">
    <property type="entry name" value="Lysozyme-like_dom_sf"/>
</dbReference>
<dbReference type="InterPro" id="IPR036950">
    <property type="entry name" value="PBP_transglycosylase"/>
</dbReference>
<dbReference type="InterPro" id="IPR011812">
    <property type="entry name" value="Pep_trsgly"/>
</dbReference>
<dbReference type="NCBIfam" id="TIGR02070">
    <property type="entry name" value="mono_pep_trsgly"/>
    <property type="match status" value="1"/>
</dbReference>
<dbReference type="PANTHER" id="PTHR30400:SF0">
    <property type="entry name" value="BIOSYNTHETIC PEPTIDOGLYCAN TRANSGLYCOSYLASE"/>
    <property type="match status" value="1"/>
</dbReference>
<dbReference type="PANTHER" id="PTHR30400">
    <property type="entry name" value="MONOFUNCTIONAL BIOSYNTHETIC PEPTIDOGLYCAN TRANSGLYCOSYLASE"/>
    <property type="match status" value="1"/>
</dbReference>
<dbReference type="Pfam" id="PF00912">
    <property type="entry name" value="Transgly"/>
    <property type="match status" value="1"/>
</dbReference>
<dbReference type="SUPFAM" id="SSF53955">
    <property type="entry name" value="Lysozyme-like"/>
    <property type="match status" value="1"/>
</dbReference>
<feature type="chain" id="PRO_0000257667" description="Biosynthetic peptidoglycan transglycosylase">
    <location>
        <begin position="1"/>
        <end position="231"/>
    </location>
</feature>
<feature type="transmembrane region" description="Helical" evidence="1">
    <location>
        <begin position="10"/>
        <end position="30"/>
    </location>
</feature>
<evidence type="ECO:0000255" key="1">
    <source>
        <dbReference type="HAMAP-Rule" id="MF_00766"/>
    </source>
</evidence>
<keyword id="KW-0997">Cell inner membrane</keyword>
<keyword id="KW-1003">Cell membrane</keyword>
<keyword id="KW-0133">Cell shape</keyword>
<keyword id="KW-0961">Cell wall biogenesis/degradation</keyword>
<keyword id="KW-0328">Glycosyltransferase</keyword>
<keyword id="KW-0472">Membrane</keyword>
<keyword id="KW-0573">Peptidoglycan synthesis</keyword>
<keyword id="KW-0808">Transferase</keyword>
<keyword id="KW-0812">Transmembrane</keyword>
<keyword id="KW-1133">Transmembrane helix</keyword>
<protein>
    <recommendedName>
        <fullName evidence="1">Biosynthetic peptidoglycan transglycosylase</fullName>
        <ecNumber evidence="1">2.4.99.28</ecNumber>
    </recommendedName>
    <alternativeName>
        <fullName evidence="1">Glycan polymerase</fullName>
    </alternativeName>
    <alternativeName>
        <fullName evidence="1">Peptidoglycan glycosyltransferase MtgA</fullName>
        <shortName evidence="1">PGT</shortName>
    </alternativeName>
</protein>
<gene>
    <name evidence="1" type="primary">mtgA</name>
    <name type="ordered locus">Daro_3906</name>
</gene>